<feature type="chain" id="PRO_0000093940" description="RNA polymerase sigma factor SigB">
    <location>
        <begin position="1"/>
        <end position="329"/>
    </location>
</feature>
<feature type="DNA-binding region" description="H-T-H motif" evidence="1">
    <location>
        <begin position="290"/>
        <end position="309"/>
    </location>
</feature>
<feature type="region of interest" description="Disordered" evidence="2">
    <location>
        <begin position="1"/>
        <end position="27"/>
    </location>
</feature>
<feature type="short sequence motif" description="Polymerase core binding">
    <location>
        <begin position="120"/>
        <end position="133"/>
    </location>
</feature>
<feature type="compositionally biased region" description="Polar residues" evidence="2">
    <location>
        <begin position="1"/>
        <end position="12"/>
    </location>
</feature>
<protein>
    <recommendedName>
        <fullName>RNA polymerase sigma factor SigB</fullName>
    </recommendedName>
</protein>
<organism>
    <name type="scientific">Corynebacterium diphtheriae (strain ATCC 700971 / NCTC 13129 / Biotype gravis)</name>
    <dbReference type="NCBI Taxonomy" id="257309"/>
    <lineage>
        <taxon>Bacteria</taxon>
        <taxon>Bacillati</taxon>
        <taxon>Actinomycetota</taxon>
        <taxon>Actinomycetes</taxon>
        <taxon>Mycobacteriales</taxon>
        <taxon>Corynebacteriaceae</taxon>
        <taxon>Corynebacterium</taxon>
    </lineage>
</organism>
<sequence>MTSPSDVEASTETVDRGSRRNQTNDNPSADLVRVYLNGIGKTALLNAEDEVELAQTIEVGLYAEYLLENSQEPLTRAMKRDLKVLVKEGRKARSHLLEANLRLVVSLAKRYTGRGMPLLDLIQEGNLGLIRAMEKFDYSKGFKFSTYATWWIRQAITRGMADQSRTIRLPVHLVEQVNKLSRIKREMYQQLGREATNEELAEESGIEESKIEMLLRQSRDPVSLDMPVGADEEAPLGDFIEDSEATDAESAVVASLRHSDIRTVLDTLEQREQDVIRLRYGLDDGVPRTLDQIGRQFGLSRERVRQIEREVMSKLRDGARAEKLRAYAQ</sequence>
<accession>P33118</accession>
<comment type="function">
    <text evidence="1">Sigma factors are initiation factors that promote the attachment of RNA polymerase to specific initiation sites and are then released.</text>
</comment>
<comment type="similarity">
    <text evidence="3">Belongs to the sigma-70 factor family.</text>
</comment>
<comment type="sequence caution" evidence="3">
    <conflict type="erroneous initiation">
        <sequence resource="EMBL-CDS" id="AAA23295"/>
    </conflict>
</comment>
<comment type="sequence caution" evidence="3">
    <conflict type="erroneous initiation">
        <sequence resource="EMBL-CDS" id="AAA23298"/>
    </conflict>
</comment>
<evidence type="ECO:0000250" key="1"/>
<evidence type="ECO:0000256" key="2">
    <source>
        <dbReference type="SAM" id="MobiDB-lite"/>
    </source>
</evidence>
<evidence type="ECO:0000305" key="3"/>
<proteinExistence type="inferred from homology"/>
<gene>
    <name type="primary">sigB</name>
    <name type="ordered locus">DIP1413</name>
</gene>
<reference key="1">
    <citation type="journal article" date="2003" name="Nucleic Acids Res.">
        <title>The complete genome sequence and analysis of Corynebacterium diphtheriae NCTC13129.</title>
        <authorList>
            <person name="Cerdeno-Tarraga A.-M."/>
            <person name="Efstratiou A."/>
            <person name="Dover L.G."/>
            <person name="Holden M.T.G."/>
            <person name="Pallen M.J."/>
            <person name="Bentley S.D."/>
            <person name="Besra G.S."/>
            <person name="Churcher C.M."/>
            <person name="James K.D."/>
            <person name="De Zoysa A."/>
            <person name="Chillingworth T."/>
            <person name="Cronin A."/>
            <person name="Dowd L."/>
            <person name="Feltwell T."/>
            <person name="Hamlin N."/>
            <person name="Holroyd S."/>
            <person name="Jagels K."/>
            <person name="Moule S."/>
            <person name="Quail M.A."/>
            <person name="Rabbinowitsch E."/>
            <person name="Rutherford K.M."/>
            <person name="Thomson N.R."/>
            <person name="Unwin L."/>
            <person name="Whitehead S."/>
            <person name="Barrell B.G."/>
            <person name="Parkhill J."/>
        </authorList>
    </citation>
    <scope>NUCLEOTIDE SEQUENCE [LARGE SCALE GENOMIC DNA]</scope>
    <source>
        <strain>ATCC 700971 / NCTC 13129 / Biotype gravis</strain>
    </source>
</reference>
<reference key="2">
    <citation type="journal article" date="1990" name="Proc. Natl. Acad. Sci. U.S.A.">
        <title>Molecular cloning and DNA sequence analysis of a diphtheria tox iron-dependent regulatory element (dtxR) from Corynebacterium diphtheriae.</title>
        <authorList>
            <person name="Boyd J.M."/>
            <person name="Oza M.N."/>
            <person name="Murphy J.R."/>
        </authorList>
    </citation>
    <scope>NUCLEOTIDE SEQUENCE [GENOMIC DNA] OF 179-329</scope>
    <source>
        <strain>C7(-)</strain>
    </source>
</reference>
<keyword id="KW-0238">DNA-binding</keyword>
<keyword id="KW-1185">Reference proteome</keyword>
<keyword id="KW-0731">Sigma factor</keyword>
<keyword id="KW-0804">Transcription</keyword>
<keyword id="KW-0805">Transcription regulation</keyword>
<dbReference type="EMBL" id="BX248358">
    <property type="protein sequence ID" value="CAE49944.1"/>
    <property type="molecule type" value="Genomic_DNA"/>
</dbReference>
<dbReference type="EMBL" id="M80338">
    <property type="protein sequence ID" value="AAA23298.1"/>
    <property type="status" value="ALT_INIT"/>
    <property type="molecule type" value="Genomic_DNA"/>
</dbReference>
<dbReference type="EMBL" id="M34239">
    <property type="protein sequence ID" value="AAA23295.1"/>
    <property type="status" value="ALT_INIT"/>
    <property type="molecule type" value="Genomic_DNA"/>
</dbReference>
<dbReference type="RefSeq" id="WP_003851800.1">
    <property type="nucleotide sequence ID" value="NC_002935.2"/>
</dbReference>
<dbReference type="SMR" id="P33118"/>
<dbReference type="STRING" id="257309.DIP1413"/>
<dbReference type="KEGG" id="cdi:DIP1413"/>
<dbReference type="HOGENOM" id="CLU_014793_3_5_11"/>
<dbReference type="Proteomes" id="UP000002198">
    <property type="component" value="Chromosome"/>
</dbReference>
<dbReference type="GO" id="GO:0003677">
    <property type="term" value="F:DNA binding"/>
    <property type="evidence" value="ECO:0007669"/>
    <property type="project" value="UniProtKB-KW"/>
</dbReference>
<dbReference type="GO" id="GO:0016987">
    <property type="term" value="F:sigma factor activity"/>
    <property type="evidence" value="ECO:0007669"/>
    <property type="project" value="UniProtKB-KW"/>
</dbReference>
<dbReference type="GO" id="GO:0006352">
    <property type="term" value="P:DNA-templated transcription initiation"/>
    <property type="evidence" value="ECO:0007669"/>
    <property type="project" value="InterPro"/>
</dbReference>
<dbReference type="CDD" id="cd06171">
    <property type="entry name" value="Sigma70_r4"/>
    <property type="match status" value="1"/>
</dbReference>
<dbReference type="FunFam" id="1.10.601.10:FF:000001">
    <property type="entry name" value="RNA polymerase sigma factor SigA"/>
    <property type="match status" value="1"/>
</dbReference>
<dbReference type="Gene3D" id="1.10.601.10">
    <property type="entry name" value="RNA Polymerase Primary Sigma Factor"/>
    <property type="match status" value="2"/>
</dbReference>
<dbReference type="Gene3D" id="1.10.10.10">
    <property type="entry name" value="Winged helix-like DNA-binding domain superfamily/Winged helix DNA-binding domain"/>
    <property type="match status" value="2"/>
</dbReference>
<dbReference type="InterPro" id="IPR014284">
    <property type="entry name" value="RNA_pol_sigma-70_dom"/>
</dbReference>
<dbReference type="InterPro" id="IPR000943">
    <property type="entry name" value="RNA_pol_sigma70"/>
</dbReference>
<dbReference type="InterPro" id="IPR009042">
    <property type="entry name" value="RNA_pol_sigma70_r1_2"/>
</dbReference>
<dbReference type="InterPro" id="IPR007627">
    <property type="entry name" value="RNA_pol_sigma70_r2"/>
</dbReference>
<dbReference type="InterPro" id="IPR007624">
    <property type="entry name" value="RNA_pol_sigma70_r3"/>
</dbReference>
<dbReference type="InterPro" id="IPR007630">
    <property type="entry name" value="RNA_pol_sigma70_r4"/>
</dbReference>
<dbReference type="InterPro" id="IPR013325">
    <property type="entry name" value="RNA_pol_sigma_r2"/>
</dbReference>
<dbReference type="InterPro" id="IPR013324">
    <property type="entry name" value="RNA_pol_sigma_r3/r4-like"/>
</dbReference>
<dbReference type="InterPro" id="IPR050239">
    <property type="entry name" value="Sigma-70_RNA_pol_init_factors"/>
</dbReference>
<dbReference type="InterPro" id="IPR036388">
    <property type="entry name" value="WH-like_DNA-bd_sf"/>
</dbReference>
<dbReference type="NCBIfam" id="NF005920">
    <property type="entry name" value="PRK07921.1"/>
    <property type="match status" value="1"/>
</dbReference>
<dbReference type="NCBIfam" id="TIGR02937">
    <property type="entry name" value="sigma70-ECF"/>
    <property type="match status" value="1"/>
</dbReference>
<dbReference type="PANTHER" id="PTHR30603">
    <property type="entry name" value="RNA POLYMERASE SIGMA FACTOR RPO"/>
    <property type="match status" value="1"/>
</dbReference>
<dbReference type="PANTHER" id="PTHR30603:SF60">
    <property type="entry name" value="RNA POLYMERASE SIGMA FACTOR RPOD"/>
    <property type="match status" value="1"/>
</dbReference>
<dbReference type="Pfam" id="PF00140">
    <property type="entry name" value="Sigma70_r1_2"/>
    <property type="match status" value="1"/>
</dbReference>
<dbReference type="Pfam" id="PF04542">
    <property type="entry name" value="Sigma70_r2"/>
    <property type="match status" value="1"/>
</dbReference>
<dbReference type="Pfam" id="PF04539">
    <property type="entry name" value="Sigma70_r3"/>
    <property type="match status" value="1"/>
</dbReference>
<dbReference type="Pfam" id="PF04545">
    <property type="entry name" value="Sigma70_r4"/>
    <property type="match status" value="1"/>
</dbReference>
<dbReference type="PRINTS" id="PR00046">
    <property type="entry name" value="SIGMA70FCT"/>
</dbReference>
<dbReference type="SUPFAM" id="SSF88946">
    <property type="entry name" value="Sigma2 domain of RNA polymerase sigma factors"/>
    <property type="match status" value="1"/>
</dbReference>
<dbReference type="SUPFAM" id="SSF88659">
    <property type="entry name" value="Sigma3 and sigma4 domains of RNA polymerase sigma factors"/>
    <property type="match status" value="2"/>
</dbReference>
<dbReference type="PROSITE" id="PS00715">
    <property type="entry name" value="SIGMA70_1"/>
    <property type="match status" value="1"/>
</dbReference>
<dbReference type="PROSITE" id="PS00716">
    <property type="entry name" value="SIGMA70_2"/>
    <property type="match status" value="1"/>
</dbReference>
<name>RPSB_CORDI</name>